<comment type="function">
    <text evidence="1">ATPase subunit of a proteasome-like degradation complex; this subunit has chaperone activity. The binding of ATP and its subsequent hydrolysis by HslU are essential for unfolding of protein substrates subsequently hydrolyzed by HslV. HslU recognizes the N-terminal part of its protein substrates and unfolds these before they are guided to HslV for hydrolysis.</text>
</comment>
<comment type="subunit">
    <text evidence="1">A double ring-shaped homohexamer of HslV is capped on each side by a ring-shaped HslU homohexamer. The assembly of the HslU/HslV complex is dependent on binding of ATP.</text>
</comment>
<comment type="subcellular location">
    <subcellularLocation>
        <location evidence="1">Cytoplasm</location>
    </subcellularLocation>
</comment>
<comment type="similarity">
    <text evidence="1">Belongs to the ClpX chaperone family. HslU subfamily.</text>
</comment>
<organism>
    <name type="scientific">Azorhizobium caulinodans (strain ATCC 43989 / DSM 5975 / JCM 20966 / LMG 6465 / NBRC 14845 / NCIMB 13405 / ORS 571)</name>
    <dbReference type="NCBI Taxonomy" id="438753"/>
    <lineage>
        <taxon>Bacteria</taxon>
        <taxon>Pseudomonadati</taxon>
        <taxon>Pseudomonadota</taxon>
        <taxon>Alphaproteobacteria</taxon>
        <taxon>Hyphomicrobiales</taxon>
        <taxon>Xanthobacteraceae</taxon>
        <taxon>Azorhizobium</taxon>
    </lineage>
</organism>
<name>HSLU_AZOC5</name>
<proteinExistence type="inferred from homology"/>
<feature type="chain" id="PRO_1000071850" description="ATP-dependent protease ATPase subunit HslU">
    <location>
        <begin position="1"/>
        <end position="435"/>
    </location>
</feature>
<feature type="binding site" evidence="1">
    <location>
        <position position="18"/>
    </location>
    <ligand>
        <name>ATP</name>
        <dbReference type="ChEBI" id="CHEBI:30616"/>
    </ligand>
</feature>
<feature type="binding site" evidence="1">
    <location>
        <begin position="60"/>
        <end position="65"/>
    </location>
    <ligand>
        <name>ATP</name>
        <dbReference type="ChEBI" id="CHEBI:30616"/>
    </ligand>
</feature>
<feature type="binding site" evidence="1">
    <location>
        <position position="248"/>
    </location>
    <ligand>
        <name>ATP</name>
        <dbReference type="ChEBI" id="CHEBI:30616"/>
    </ligand>
</feature>
<feature type="binding site" evidence="1">
    <location>
        <position position="313"/>
    </location>
    <ligand>
        <name>ATP</name>
        <dbReference type="ChEBI" id="CHEBI:30616"/>
    </ligand>
</feature>
<feature type="binding site" evidence="1">
    <location>
        <position position="385"/>
    </location>
    <ligand>
        <name>ATP</name>
        <dbReference type="ChEBI" id="CHEBI:30616"/>
    </ligand>
</feature>
<sequence>MSDFSPREIVSELDRHIVGQGKAKRAVAIALRNRWRRQQLQGHMREEVLPKNILMIGPTGVGKTEISRRLARLAGAPFLKVEATKFTEVGYVGRDVEQIIRDLVEVGIGLVREQKRKDVQARAHLAAEERVLDALVGANSSSTTRDAFRKKLRAGELDEKEVEIEVQAGAQGMPMFEIPGMPGAQMGAVSLGDMLGKAFGGRTKARRVLVKDAHPLLLTEEADKLIDQEATTQEAIYAVENNGIVFLDEIDKIAQREGRSGADVSREGVQRDLLPLIEGTTVSTKHGPVKTDHILFIASGAFHVSKPSDLLPELQGRLPIRVELEALTRADFVRILTETEASLVKQSVALMGTEGVTLDISPDAVEAIADVAVEVNSTVENIGARRLQTVMERVLDELSFTAPDRSGETVSIDAAYVRERVADLAKNADLSRFIL</sequence>
<reference key="1">
    <citation type="submission" date="2007-04" db="EMBL/GenBank/DDBJ databases">
        <title>Complete genome sequence of the nitrogen-fixing bacterium Azorhizobium caulinodans ORS571.</title>
        <authorList>
            <person name="Lee K.B."/>
            <person name="Backer P.D."/>
            <person name="Aono T."/>
            <person name="Liu C.T."/>
            <person name="Suzuki S."/>
            <person name="Suzuki T."/>
            <person name="Kaneko T."/>
            <person name="Yamada M."/>
            <person name="Tabata S."/>
            <person name="Kupfer D.M."/>
            <person name="Najar F.Z."/>
            <person name="Wiley G.B."/>
            <person name="Roe B."/>
            <person name="Binnewies T."/>
            <person name="Ussery D."/>
            <person name="Vereecke D."/>
            <person name="Gevers D."/>
            <person name="Holsters M."/>
            <person name="Oyaizu H."/>
        </authorList>
    </citation>
    <scope>NUCLEOTIDE SEQUENCE [LARGE SCALE GENOMIC DNA]</scope>
    <source>
        <strain>ATCC 43989 / DSM 5975 / JCM 20966 / LMG 6465 / NBRC 14845 / NCIMB 13405 / ORS 571</strain>
    </source>
</reference>
<keyword id="KW-0067">ATP-binding</keyword>
<keyword id="KW-0143">Chaperone</keyword>
<keyword id="KW-0963">Cytoplasm</keyword>
<keyword id="KW-0547">Nucleotide-binding</keyword>
<keyword id="KW-1185">Reference proteome</keyword>
<keyword id="KW-0346">Stress response</keyword>
<accession>A8IIZ0</accession>
<dbReference type="EMBL" id="AP009384">
    <property type="protein sequence ID" value="BAF86219.1"/>
    <property type="molecule type" value="Genomic_DNA"/>
</dbReference>
<dbReference type="RefSeq" id="WP_012168752.1">
    <property type="nucleotide sequence ID" value="NC_009937.1"/>
</dbReference>
<dbReference type="SMR" id="A8IIZ0"/>
<dbReference type="STRING" id="438753.AZC_0221"/>
<dbReference type="KEGG" id="azc:AZC_0221"/>
<dbReference type="eggNOG" id="COG1220">
    <property type="taxonomic scope" value="Bacteria"/>
</dbReference>
<dbReference type="HOGENOM" id="CLU_033123_0_0_5"/>
<dbReference type="Proteomes" id="UP000000270">
    <property type="component" value="Chromosome"/>
</dbReference>
<dbReference type="GO" id="GO:0009376">
    <property type="term" value="C:HslUV protease complex"/>
    <property type="evidence" value="ECO:0007669"/>
    <property type="project" value="UniProtKB-UniRule"/>
</dbReference>
<dbReference type="GO" id="GO:0005524">
    <property type="term" value="F:ATP binding"/>
    <property type="evidence" value="ECO:0007669"/>
    <property type="project" value="UniProtKB-UniRule"/>
</dbReference>
<dbReference type="GO" id="GO:0016887">
    <property type="term" value="F:ATP hydrolysis activity"/>
    <property type="evidence" value="ECO:0007669"/>
    <property type="project" value="InterPro"/>
</dbReference>
<dbReference type="GO" id="GO:0008233">
    <property type="term" value="F:peptidase activity"/>
    <property type="evidence" value="ECO:0007669"/>
    <property type="project" value="InterPro"/>
</dbReference>
<dbReference type="GO" id="GO:0036402">
    <property type="term" value="F:proteasome-activating activity"/>
    <property type="evidence" value="ECO:0007669"/>
    <property type="project" value="UniProtKB-UniRule"/>
</dbReference>
<dbReference type="GO" id="GO:0043335">
    <property type="term" value="P:protein unfolding"/>
    <property type="evidence" value="ECO:0007669"/>
    <property type="project" value="UniProtKB-UniRule"/>
</dbReference>
<dbReference type="GO" id="GO:0051603">
    <property type="term" value="P:proteolysis involved in protein catabolic process"/>
    <property type="evidence" value="ECO:0007669"/>
    <property type="project" value="TreeGrafter"/>
</dbReference>
<dbReference type="CDD" id="cd19498">
    <property type="entry name" value="RecA-like_HslU"/>
    <property type="match status" value="1"/>
</dbReference>
<dbReference type="FunFam" id="3.40.50.300:FF:000213">
    <property type="entry name" value="ATP-dependent protease ATPase subunit HslU"/>
    <property type="match status" value="1"/>
</dbReference>
<dbReference type="FunFam" id="3.40.50.300:FF:000220">
    <property type="entry name" value="ATP-dependent protease ATPase subunit HslU"/>
    <property type="match status" value="1"/>
</dbReference>
<dbReference type="Gene3D" id="1.10.8.60">
    <property type="match status" value="1"/>
</dbReference>
<dbReference type="Gene3D" id="1.10.8.10">
    <property type="entry name" value="DNA helicase RuvA subunit, C-terminal domain"/>
    <property type="match status" value="1"/>
</dbReference>
<dbReference type="Gene3D" id="3.40.50.300">
    <property type="entry name" value="P-loop containing nucleotide triphosphate hydrolases"/>
    <property type="match status" value="1"/>
</dbReference>
<dbReference type="HAMAP" id="MF_00249">
    <property type="entry name" value="HslU"/>
    <property type="match status" value="1"/>
</dbReference>
<dbReference type="InterPro" id="IPR003593">
    <property type="entry name" value="AAA+_ATPase"/>
</dbReference>
<dbReference type="InterPro" id="IPR050052">
    <property type="entry name" value="ATP-dep_Clp_protease_ClpX"/>
</dbReference>
<dbReference type="InterPro" id="IPR003959">
    <property type="entry name" value="ATPase_AAA_core"/>
</dbReference>
<dbReference type="InterPro" id="IPR019489">
    <property type="entry name" value="Clp_ATPase_C"/>
</dbReference>
<dbReference type="InterPro" id="IPR004491">
    <property type="entry name" value="HslU"/>
</dbReference>
<dbReference type="InterPro" id="IPR027417">
    <property type="entry name" value="P-loop_NTPase"/>
</dbReference>
<dbReference type="NCBIfam" id="TIGR00390">
    <property type="entry name" value="hslU"/>
    <property type="match status" value="1"/>
</dbReference>
<dbReference type="NCBIfam" id="NF003544">
    <property type="entry name" value="PRK05201.1"/>
    <property type="match status" value="1"/>
</dbReference>
<dbReference type="PANTHER" id="PTHR48102">
    <property type="entry name" value="ATP-DEPENDENT CLP PROTEASE ATP-BINDING SUBUNIT CLPX-LIKE, MITOCHONDRIAL-RELATED"/>
    <property type="match status" value="1"/>
</dbReference>
<dbReference type="PANTHER" id="PTHR48102:SF3">
    <property type="entry name" value="ATP-DEPENDENT PROTEASE ATPASE SUBUNIT HSLU"/>
    <property type="match status" value="1"/>
</dbReference>
<dbReference type="Pfam" id="PF00004">
    <property type="entry name" value="AAA"/>
    <property type="match status" value="1"/>
</dbReference>
<dbReference type="Pfam" id="PF07724">
    <property type="entry name" value="AAA_2"/>
    <property type="match status" value="1"/>
</dbReference>
<dbReference type="SMART" id="SM00382">
    <property type="entry name" value="AAA"/>
    <property type="match status" value="1"/>
</dbReference>
<dbReference type="SMART" id="SM01086">
    <property type="entry name" value="ClpB_D2-small"/>
    <property type="match status" value="1"/>
</dbReference>
<dbReference type="SUPFAM" id="SSF52540">
    <property type="entry name" value="P-loop containing nucleoside triphosphate hydrolases"/>
    <property type="match status" value="1"/>
</dbReference>
<gene>
    <name evidence="1" type="primary">hslU</name>
    <name type="ordered locus">AZC_0221</name>
</gene>
<evidence type="ECO:0000255" key="1">
    <source>
        <dbReference type="HAMAP-Rule" id="MF_00249"/>
    </source>
</evidence>
<protein>
    <recommendedName>
        <fullName evidence="1">ATP-dependent protease ATPase subunit HslU</fullName>
    </recommendedName>
    <alternativeName>
        <fullName evidence="1">Unfoldase HslU</fullName>
    </alternativeName>
</protein>